<evidence type="ECO:0000255" key="1">
    <source>
        <dbReference type="HAMAP-Rule" id="MF_01636"/>
    </source>
</evidence>
<reference key="1">
    <citation type="submission" date="2006-02" db="EMBL/GenBank/DDBJ databases">
        <title>Complete sequence of chromosome of Rhodoferax ferrireducens DSM 15236.</title>
        <authorList>
            <person name="Copeland A."/>
            <person name="Lucas S."/>
            <person name="Lapidus A."/>
            <person name="Barry K."/>
            <person name="Detter J.C."/>
            <person name="Glavina del Rio T."/>
            <person name="Hammon N."/>
            <person name="Israni S."/>
            <person name="Pitluck S."/>
            <person name="Brettin T."/>
            <person name="Bruce D."/>
            <person name="Han C."/>
            <person name="Tapia R."/>
            <person name="Gilna P."/>
            <person name="Kiss H."/>
            <person name="Schmutz J."/>
            <person name="Larimer F."/>
            <person name="Land M."/>
            <person name="Kyrpides N."/>
            <person name="Ivanova N."/>
            <person name="Richardson P."/>
        </authorList>
    </citation>
    <scope>NUCLEOTIDE SEQUENCE [LARGE SCALE GENOMIC DNA]</scope>
    <source>
        <strain>ATCC BAA-621 / DSM 15236 / T118</strain>
    </source>
</reference>
<feature type="chain" id="PRO_0000267689" description="3-octaprenyl-4-hydroxybenzoate carboxy-lyase">
    <location>
        <begin position="1"/>
        <end position="494"/>
    </location>
</feature>
<feature type="active site" description="Proton donor" evidence="1">
    <location>
        <position position="294"/>
    </location>
</feature>
<feature type="binding site" evidence="1">
    <location>
        <position position="172"/>
    </location>
    <ligand>
        <name>Mn(2+)</name>
        <dbReference type="ChEBI" id="CHEBI:29035"/>
    </ligand>
</feature>
<feature type="binding site" evidence="1">
    <location>
        <begin position="175"/>
        <end position="177"/>
    </location>
    <ligand>
        <name>prenylated FMN</name>
        <dbReference type="ChEBI" id="CHEBI:87746"/>
    </ligand>
</feature>
<feature type="binding site" evidence="1">
    <location>
        <begin position="189"/>
        <end position="191"/>
    </location>
    <ligand>
        <name>prenylated FMN</name>
        <dbReference type="ChEBI" id="CHEBI:87746"/>
    </ligand>
</feature>
<feature type="binding site" evidence="1">
    <location>
        <begin position="194"/>
        <end position="195"/>
    </location>
    <ligand>
        <name>prenylated FMN</name>
        <dbReference type="ChEBI" id="CHEBI:87746"/>
    </ligand>
</feature>
<feature type="binding site" evidence="1">
    <location>
        <position position="238"/>
    </location>
    <ligand>
        <name>Mn(2+)</name>
        <dbReference type="ChEBI" id="CHEBI:29035"/>
    </ligand>
</feature>
<sequence>MAYRDLRDFITQLEHLGELKRVQAEVSPYLEMTALCDRTLRAGGPALLFENPTGHNTPVLGNLFGTTRRVALGMGVNDVSELRQFGHVLASLKEPEAPKGFKELMGLGSLVKTLWAMAPKELRSAPCQEIIWEGADVDLARLPIQHCWPGDVAPLITWGLVITQGPHKARQNLGIYRQQVLARNKVIMRWLAQRGGALDFKEHAALNPGQPYPVCVALGADPATILGAVTPVPDSLSEYQFAGLLRGSRTELVKALGSELRVPAFAEIVLEGHIYPDATHASGFEHALEGPFGDHTGYYNEQDWFPVFTIDRITQRRDPIYHSTYTGKPPDEPAMLALALNELFVPLLQRQYPEITDFYLPPEGCSYRLAVVQIKKSYPGHARRVMFGIWSFLRQFMYTKFIVVVDDDVNIRDWKDVIWAITTRVDPTRDTLLADSTPIDYLDFASPVSGLGSKMGLDATNKWPGETSREWGRPLTMSADVTARVEQVWQTLGL</sequence>
<protein>
    <recommendedName>
        <fullName evidence="1">3-octaprenyl-4-hydroxybenzoate carboxy-lyase</fullName>
        <ecNumber evidence="1">4.1.1.98</ecNumber>
    </recommendedName>
    <alternativeName>
        <fullName evidence="1">Polyprenyl p-hydroxybenzoate decarboxylase</fullName>
    </alternativeName>
</protein>
<accession>Q223B1</accession>
<organism>
    <name type="scientific">Albidiferax ferrireducens (strain ATCC BAA-621 / DSM 15236 / T118)</name>
    <name type="common">Rhodoferax ferrireducens</name>
    <dbReference type="NCBI Taxonomy" id="338969"/>
    <lineage>
        <taxon>Bacteria</taxon>
        <taxon>Pseudomonadati</taxon>
        <taxon>Pseudomonadota</taxon>
        <taxon>Betaproteobacteria</taxon>
        <taxon>Burkholderiales</taxon>
        <taxon>Comamonadaceae</taxon>
        <taxon>Rhodoferax</taxon>
    </lineage>
</organism>
<comment type="function">
    <text evidence="1">Catalyzes the decarboxylation of 3-octaprenyl-4-hydroxy benzoate to 2-octaprenylphenol, an intermediate step in ubiquinone biosynthesis.</text>
</comment>
<comment type="catalytic activity">
    <reaction evidence="1">
        <text>a 4-hydroxy-3-(all-trans-polyprenyl)benzoate + H(+) = a 2-(all-trans-polyprenyl)phenol + CO2</text>
        <dbReference type="Rhea" id="RHEA:41680"/>
        <dbReference type="Rhea" id="RHEA-COMP:9514"/>
        <dbReference type="Rhea" id="RHEA-COMP:9516"/>
        <dbReference type="ChEBI" id="CHEBI:1269"/>
        <dbReference type="ChEBI" id="CHEBI:15378"/>
        <dbReference type="ChEBI" id="CHEBI:16526"/>
        <dbReference type="ChEBI" id="CHEBI:78396"/>
        <dbReference type="EC" id="4.1.1.98"/>
    </reaction>
</comment>
<comment type="cofactor">
    <cofactor evidence="1">
        <name>prenylated FMN</name>
        <dbReference type="ChEBI" id="CHEBI:87746"/>
    </cofactor>
    <text evidence="1">Binds 1 prenylated FMN per subunit.</text>
</comment>
<comment type="cofactor">
    <cofactor evidence="1">
        <name>Mn(2+)</name>
        <dbReference type="ChEBI" id="CHEBI:29035"/>
    </cofactor>
</comment>
<comment type="pathway">
    <text evidence="1">Cofactor biosynthesis; ubiquinone biosynthesis.</text>
</comment>
<comment type="subunit">
    <text evidence="1">Homohexamer.</text>
</comment>
<comment type="subcellular location">
    <subcellularLocation>
        <location evidence="1">Cell membrane</location>
        <topology evidence="1">Peripheral membrane protein</topology>
    </subcellularLocation>
</comment>
<comment type="similarity">
    <text evidence="1">Belongs to the UbiD family.</text>
</comment>
<dbReference type="EC" id="4.1.1.98" evidence="1"/>
<dbReference type="EMBL" id="CP000267">
    <property type="protein sequence ID" value="ABD67892.1"/>
    <property type="molecule type" value="Genomic_DNA"/>
</dbReference>
<dbReference type="RefSeq" id="WP_011462465.1">
    <property type="nucleotide sequence ID" value="NC_007908.1"/>
</dbReference>
<dbReference type="SMR" id="Q223B1"/>
<dbReference type="STRING" id="338969.Rfer_0132"/>
<dbReference type="KEGG" id="rfr:Rfer_0132"/>
<dbReference type="eggNOG" id="COG0043">
    <property type="taxonomic scope" value="Bacteria"/>
</dbReference>
<dbReference type="HOGENOM" id="CLU_023348_4_1_4"/>
<dbReference type="OrthoDB" id="9809841at2"/>
<dbReference type="UniPathway" id="UPA00232"/>
<dbReference type="Proteomes" id="UP000008332">
    <property type="component" value="Chromosome"/>
</dbReference>
<dbReference type="GO" id="GO:0005829">
    <property type="term" value="C:cytosol"/>
    <property type="evidence" value="ECO:0007669"/>
    <property type="project" value="TreeGrafter"/>
</dbReference>
<dbReference type="GO" id="GO:0005886">
    <property type="term" value="C:plasma membrane"/>
    <property type="evidence" value="ECO:0007669"/>
    <property type="project" value="UniProtKB-SubCell"/>
</dbReference>
<dbReference type="GO" id="GO:0008694">
    <property type="term" value="F:3-octaprenyl-4-hydroxybenzoate carboxy-lyase activity"/>
    <property type="evidence" value="ECO:0007669"/>
    <property type="project" value="UniProtKB-UniRule"/>
</dbReference>
<dbReference type="GO" id="GO:0046872">
    <property type="term" value="F:metal ion binding"/>
    <property type="evidence" value="ECO:0007669"/>
    <property type="project" value="UniProtKB-KW"/>
</dbReference>
<dbReference type="GO" id="GO:0006744">
    <property type="term" value="P:ubiquinone biosynthetic process"/>
    <property type="evidence" value="ECO:0007669"/>
    <property type="project" value="UniProtKB-UniRule"/>
</dbReference>
<dbReference type="FunFam" id="3.40.1670.10:FF:000001">
    <property type="entry name" value="3-octaprenyl-4-hydroxybenzoate carboxy-lyase"/>
    <property type="match status" value="1"/>
</dbReference>
<dbReference type="Gene3D" id="1.20.5.570">
    <property type="entry name" value="Single helix bin"/>
    <property type="match status" value="1"/>
</dbReference>
<dbReference type="Gene3D" id="3.40.1670.10">
    <property type="entry name" value="UbiD C-terminal domain-like"/>
    <property type="match status" value="1"/>
</dbReference>
<dbReference type="HAMAP" id="MF_01636">
    <property type="entry name" value="UbiD"/>
    <property type="match status" value="1"/>
</dbReference>
<dbReference type="InterPro" id="IPR002830">
    <property type="entry name" value="UbiD"/>
</dbReference>
<dbReference type="InterPro" id="IPR049381">
    <property type="entry name" value="UbiD-like_C"/>
</dbReference>
<dbReference type="InterPro" id="IPR049383">
    <property type="entry name" value="UbiD-like_N"/>
</dbReference>
<dbReference type="InterPro" id="IPR023677">
    <property type="entry name" value="UbiD_bacteria"/>
</dbReference>
<dbReference type="InterPro" id="IPR048304">
    <property type="entry name" value="UbiD_Rift_dom"/>
</dbReference>
<dbReference type="NCBIfam" id="NF008175">
    <property type="entry name" value="PRK10922.1"/>
    <property type="match status" value="1"/>
</dbReference>
<dbReference type="NCBIfam" id="TIGR00148">
    <property type="entry name" value="UbiD family decarboxylase"/>
    <property type="match status" value="1"/>
</dbReference>
<dbReference type="PANTHER" id="PTHR30108">
    <property type="entry name" value="3-OCTAPRENYL-4-HYDROXYBENZOATE CARBOXY-LYASE-RELATED"/>
    <property type="match status" value="1"/>
</dbReference>
<dbReference type="PANTHER" id="PTHR30108:SF17">
    <property type="entry name" value="FERULIC ACID DECARBOXYLASE 1"/>
    <property type="match status" value="1"/>
</dbReference>
<dbReference type="Pfam" id="PF01977">
    <property type="entry name" value="UbiD"/>
    <property type="match status" value="1"/>
</dbReference>
<dbReference type="Pfam" id="PF20696">
    <property type="entry name" value="UbiD_C"/>
    <property type="match status" value="1"/>
</dbReference>
<dbReference type="Pfam" id="PF20695">
    <property type="entry name" value="UbiD_N"/>
    <property type="match status" value="1"/>
</dbReference>
<dbReference type="SUPFAM" id="SSF50475">
    <property type="entry name" value="FMN-binding split barrel"/>
    <property type="match status" value="1"/>
</dbReference>
<dbReference type="SUPFAM" id="SSF143968">
    <property type="entry name" value="UbiD C-terminal domain-like"/>
    <property type="match status" value="1"/>
</dbReference>
<gene>
    <name evidence="1" type="primary">ubiD</name>
    <name type="ordered locus">Rfer_0132</name>
</gene>
<name>UBID_ALBFT</name>
<proteinExistence type="inferred from homology"/>
<keyword id="KW-1003">Cell membrane</keyword>
<keyword id="KW-0210">Decarboxylase</keyword>
<keyword id="KW-0285">Flavoprotein</keyword>
<keyword id="KW-0288">FMN</keyword>
<keyword id="KW-0456">Lyase</keyword>
<keyword id="KW-0464">Manganese</keyword>
<keyword id="KW-0472">Membrane</keyword>
<keyword id="KW-0479">Metal-binding</keyword>
<keyword id="KW-1185">Reference proteome</keyword>
<keyword id="KW-0831">Ubiquinone biosynthesis</keyword>